<proteinExistence type="predicted"/>
<organism>
    <name type="scientific">Bacillus subtilis (strain 168)</name>
    <dbReference type="NCBI Taxonomy" id="224308"/>
    <lineage>
        <taxon>Bacteria</taxon>
        <taxon>Bacillati</taxon>
        <taxon>Bacillota</taxon>
        <taxon>Bacilli</taxon>
        <taxon>Bacillales</taxon>
        <taxon>Bacillaceae</taxon>
        <taxon>Bacillus</taxon>
    </lineage>
</organism>
<gene>
    <name type="primary">yppF</name>
    <name type="ordered locus">BSU22260</name>
</gene>
<sequence length="62" mass="7266">MNVSYLSKRFAEMKKYETDCMNKLMDFAKFLYIQGHLSITEFRNSMKVLEANGAESPAYEMN</sequence>
<dbReference type="EMBL" id="L47838">
    <property type="protein sequence ID" value="AAB38464.1"/>
    <property type="molecule type" value="Genomic_DNA"/>
</dbReference>
<dbReference type="EMBL" id="AL009126">
    <property type="protein sequence ID" value="CAB14143.1"/>
    <property type="molecule type" value="Genomic_DNA"/>
</dbReference>
<dbReference type="PIR" id="C69940">
    <property type="entry name" value="C69940"/>
</dbReference>
<dbReference type="RefSeq" id="NP_390108.1">
    <property type="nucleotide sequence ID" value="NC_000964.3"/>
</dbReference>
<dbReference type="RefSeq" id="WP_003230690.1">
    <property type="nucleotide sequence ID" value="NZ_OZ025638.1"/>
</dbReference>
<dbReference type="SMR" id="P50834"/>
<dbReference type="FunCoup" id="P50834">
    <property type="interactions" value="22"/>
</dbReference>
<dbReference type="STRING" id="224308.BSU22260"/>
<dbReference type="PaxDb" id="224308-BSU22260"/>
<dbReference type="EnsemblBacteria" id="CAB14143">
    <property type="protein sequence ID" value="CAB14143"/>
    <property type="gene ID" value="BSU_22260"/>
</dbReference>
<dbReference type="GeneID" id="939045"/>
<dbReference type="KEGG" id="bsu:BSU22260"/>
<dbReference type="PATRIC" id="fig|224308.179.peg.2430"/>
<dbReference type="InParanoid" id="P50834"/>
<dbReference type="OrthoDB" id="2680239at2"/>
<dbReference type="BioCyc" id="BSUB:BSU22260-MONOMER"/>
<dbReference type="Proteomes" id="UP000001570">
    <property type="component" value="Chromosome"/>
</dbReference>
<dbReference type="InterPro" id="IPR025553">
    <property type="entry name" value="YppF"/>
</dbReference>
<dbReference type="Pfam" id="PF14178">
    <property type="entry name" value="YppF"/>
    <property type="match status" value="1"/>
</dbReference>
<accession>P50834</accession>
<feature type="chain" id="PRO_0000049720" description="Uncharacterized protein YppF">
    <location>
        <begin position="1"/>
        <end position="62"/>
    </location>
</feature>
<reference key="1">
    <citation type="journal article" date="1996" name="Microbiology">
        <title>Sequence analysis of the Bacillus subtilis chromosome region between the serA and kdg loci cloned in a yeast artificial chromosome.</title>
        <authorList>
            <person name="Sorokin A.V."/>
            <person name="Azevedo V."/>
            <person name="Zumstein E."/>
            <person name="Galleron N."/>
            <person name="Ehrlich S.D."/>
            <person name="Serror P."/>
        </authorList>
    </citation>
    <scope>NUCLEOTIDE SEQUENCE [GENOMIC DNA]</scope>
    <source>
        <strain>168 / Marburg / ATCC 6051 / DSM 10 / JCM 1465 / NBRC 13719 / NCIMB 3610 / NRRL NRS-744 / VKM B-501</strain>
    </source>
</reference>
<reference key="2">
    <citation type="journal article" date="1997" name="Nature">
        <title>The complete genome sequence of the Gram-positive bacterium Bacillus subtilis.</title>
        <authorList>
            <person name="Kunst F."/>
            <person name="Ogasawara N."/>
            <person name="Moszer I."/>
            <person name="Albertini A.M."/>
            <person name="Alloni G."/>
            <person name="Azevedo V."/>
            <person name="Bertero M.G."/>
            <person name="Bessieres P."/>
            <person name="Bolotin A."/>
            <person name="Borchert S."/>
            <person name="Borriss R."/>
            <person name="Boursier L."/>
            <person name="Brans A."/>
            <person name="Braun M."/>
            <person name="Brignell S.C."/>
            <person name="Bron S."/>
            <person name="Brouillet S."/>
            <person name="Bruschi C.V."/>
            <person name="Caldwell B."/>
            <person name="Capuano V."/>
            <person name="Carter N.M."/>
            <person name="Choi S.-K."/>
            <person name="Codani J.-J."/>
            <person name="Connerton I.F."/>
            <person name="Cummings N.J."/>
            <person name="Daniel R.A."/>
            <person name="Denizot F."/>
            <person name="Devine K.M."/>
            <person name="Duesterhoeft A."/>
            <person name="Ehrlich S.D."/>
            <person name="Emmerson P.T."/>
            <person name="Entian K.-D."/>
            <person name="Errington J."/>
            <person name="Fabret C."/>
            <person name="Ferrari E."/>
            <person name="Foulger D."/>
            <person name="Fritz C."/>
            <person name="Fujita M."/>
            <person name="Fujita Y."/>
            <person name="Fuma S."/>
            <person name="Galizzi A."/>
            <person name="Galleron N."/>
            <person name="Ghim S.-Y."/>
            <person name="Glaser P."/>
            <person name="Goffeau A."/>
            <person name="Golightly E.J."/>
            <person name="Grandi G."/>
            <person name="Guiseppi G."/>
            <person name="Guy B.J."/>
            <person name="Haga K."/>
            <person name="Haiech J."/>
            <person name="Harwood C.R."/>
            <person name="Henaut A."/>
            <person name="Hilbert H."/>
            <person name="Holsappel S."/>
            <person name="Hosono S."/>
            <person name="Hullo M.-F."/>
            <person name="Itaya M."/>
            <person name="Jones L.-M."/>
            <person name="Joris B."/>
            <person name="Karamata D."/>
            <person name="Kasahara Y."/>
            <person name="Klaerr-Blanchard M."/>
            <person name="Klein C."/>
            <person name="Kobayashi Y."/>
            <person name="Koetter P."/>
            <person name="Koningstein G."/>
            <person name="Krogh S."/>
            <person name="Kumano M."/>
            <person name="Kurita K."/>
            <person name="Lapidus A."/>
            <person name="Lardinois S."/>
            <person name="Lauber J."/>
            <person name="Lazarevic V."/>
            <person name="Lee S.-M."/>
            <person name="Levine A."/>
            <person name="Liu H."/>
            <person name="Masuda S."/>
            <person name="Mauel C."/>
            <person name="Medigue C."/>
            <person name="Medina N."/>
            <person name="Mellado R.P."/>
            <person name="Mizuno M."/>
            <person name="Moestl D."/>
            <person name="Nakai S."/>
            <person name="Noback M."/>
            <person name="Noone D."/>
            <person name="O'Reilly M."/>
            <person name="Ogawa K."/>
            <person name="Ogiwara A."/>
            <person name="Oudega B."/>
            <person name="Park S.-H."/>
            <person name="Parro V."/>
            <person name="Pohl T.M."/>
            <person name="Portetelle D."/>
            <person name="Porwollik S."/>
            <person name="Prescott A.M."/>
            <person name="Presecan E."/>
            <person name="Pujic P."/>
            <person name="Purnelle B."/>
            <person name="Rapoport G."/>
            <person name="Rey M."/>
            <person name="Reynolds S."/>
            <person name="Rieger M."/>
            <person name="Rivolta C."/>
            <person name="Rocha E."/>
            <person name="Roche B."/>
            <person name="Rose M."/>
            <person name="Sadaie Y."/>
            <person name="Sato T."/>
            <person name="Scanlan E."/>
            <person name="Schleich S."/>
            <person name="Schroeter R."/>
            <person name="Scoffone F."/>
            <person name="Sekiguchi J."/>
            <person name="Sekowska A."/>
            <person name="Seror S.J."/>
            <person name="Serror P."/>
            <person name="Shin B.-S."/>
            <person name="Soldo B."/>
            <person name="Sorokin A."/>
            <person name="Tacconi E."/>
            <person name="Takagi T."/>
            <person name="Takahashi H."/>
            <person name="Takemaru K."/>
            <person name="Takeuchi M."/>
            <person name="Tamakoshi A."/>
            <person name="Tanaka T."/>
            <person name="Terpstra P."/>
            <person name="Tognoni A."/>
            <person name="Tosato V."/>
            <person name="Uchiyama S."/>
            <person name="Vandenbol M."/>
            <person name="Vannier F."/>
            <person name="Vassarotti A."/>
            <person name="Viari A."/>
            <person name="Wambutt R."/>
            <person name="Wedler E."/>
            <person name="Wedler H."/>
            <person name="Weitzenegger T."/>
            <person name="Winters P."/>
            <person name="Wipat A."/>
            <person name="Yamamoto H."/>
            <person name="Yamane K."/>
            <person name="Yasumoto K."/>
            <person name="Yata K."/>
            <person name="Yoshida K."/>
            <person name="Yoshikawa H.-F."/>
            <person name="Zumstein E."/>
            <person name="Yoshikawa H."/>
            <person name="Danchin A."/>
        </authorList>
    </citation>
    <scope>NUCLEOTIDE SEQUENCE [LARGE SCALE GENOMIC DNA]</scope>
    <source>
        <strain>168</strain>
    </source>
</reference>
<protein>
    <recommendedName>
        <fullName>Uncharacterized protein YppF</fullName>
    </recommendedName>
</protein>
<name>YPPF_BACSU</name>
<keyword id="KW-1185">Reference proteome</keyword>